<gene>
    <name evidence="4" type="primary">trm14</name>
    <name type="ordered locus">MJ0438</name>
</gene>
<comment type="function">
    <text evidence="3">S-adenosyl-L-methionine-dependent methyltransferase that catalyzes the methylation of the guanosine nucleotide at position 6 (m2G6) in tRNA(Cys).</text>
</comment>
<comment type="catalytic activity">
    <reaction evidence="3">
        <text>guanosine(6) in tRNA + S-adenosyl-L-methionine = N(2)-methylguanosine(6) in tRNA + S-adenosyl-L-homocysteine + H(+)</text>
        <dbReference type="Rhea" id="RHEA:51116"/>
        <dbReference type="Rhea" id="RHEA-COMP:12888"/>
        <dbReference type="Rhea" id="RHEA-COMP:12889"/>
        <dbReference type="ChEBI" id="CHEBI:15378"/>
        <dbReference type="ChEBI" id="CHEBI:57856"/>
        <dbReference type="ChEBI" id="CHEBI:59789"/>
        <dbReference type="ChEBI" id="CHEBI:74269"/>
        <dbReference type="ChEBI" id="CHEBI:74481"/>
        <dbReference type="EC" id="2.1.1.256"/>
    </reaction>
</comment>
<comment type="subcellular location">
    <subcellularLocation>
        <location evidence="5">Cytoplasm</location>
    </subcellularLocation>
</comment>
<comment type="similarity">
    <text evidence="5">Belongs to the methyltransferase superfamily.</text>
</comment>
<dbReference type="EC" id="2.1.1.256" evidence="3"/>
<dbReference type="EMBL" id="L77117">
    <property type="protein sequence ID" value="AAB98426.1"/>
    <property type="molecule type" value="Genomic_DNA"/>
</dbReference>
<dbReference type="PIR" id="F64354">
    <property type="entry name" value="F64354"/>
</dbReference>
<dbReference type="RefSeq" id="WP_010869937.1">
    <property type="nucleotide sequence ID" value="NC_000909.1"/>
</dbReference>
<dbReference type="SMR" id="Q57880"/>
<dbReference type="FunCoup" id="Q57880">
    <property type="interactions" value="48"/>
</dbReference>
<dbReference type="STRING" id="243232.MJ_0438"/>
<dbReference type="PaxDb" id="243232-MJ_0438"/>
<dbReference type="EnsemblBacteria" id="AAB98426">
    <property type="protein sequence ID" value="AAB98426"/>
    <property type="gene ID" value="MJ_0438"/>
</dbReference>
<dbReference type="GeneID" id="1451298"/>
<dbReference type="KEGG" id="mja:MJ_0438"/>
<dbReference type="eggNOG" id="arCOG00048">
    <property type="taxonomic scope" value="Archaea"/>
</dbReference>
<dbReference type="HOGENOM" id="CLU_032119_0_0_2"/>
<dbReference type="InParanoid" id="Q57880"/>
<dbReference type="OrthoDB" id="7080at2157"/>
<dbReference type="PhylomeDB" id="Q57880"/>
<dbReference type="BRENDA" id="2.1.1.256">
    <property type="organism ID" value="3260"/>
</dbReference>
<dbReference type="Proteomes" id="UP000000805">
    <property type="component" value="Chromosome"/>
</dbReference>
<dbReference type="GO" id="GO:0005737">
    <property type="term" value="C:cytoplasm"/>
    <property type="evidence" value="ECO:0007669"/>
    <property type="project" value="UniProtKB-SubCell"/>
</dbReference>
<dbReference type="GO" id="GO:0003723">
    <property type="term" value="F:RNA binding"/>
    <property type="evidence" value="ECO:0007669"/>
    <property type="project" value="UniProtKB-KW"/>
</dbReference>
<dbReference type="GO" id="GO:0160117">
    <property type="term" value="F:tRNA (guanine(6)-N2)-methyltransferase activity"/>
    <property type="evidence" value="ECO:0007669"/>
    <property type="project" value="UniProtKB-EC"/>
</dbReference>
<dbReference type="GO" id="GO:0016423">
    <property type="term" value="F:tRNA (guanine) methyltransferase activity"/>
    <property type="evidence" value="ECO:0000314"/>
    <property type="project" value="UniProtKB"/>
</dbReference>
<dbReference type="GO" id="GO:0030488">
    <property type="term" value="P:tRNA methylation"/>
    <property type="evidence" value="ECO:0000314"/>
    <property type="project" value="UniProtKB"/>
</dbReference>
<dbReference type="CDD" id="cd02440">
    <property type="entry name" value="AdoMet_MTases"/>
    <property type="match status" value="1"/>
</dbReference>
<dbReference type="CDD" id="cd11715">
    <property type="entry name" value="THUMP_AdoMetMT"/>
    <property type="match status" value="1"/>
</dbReference>
<dbReference type="FunFam" id="3.30.2130.30:FF:000014">
    <property type="entry name" value="Putative RNA methylase"/>
    <property type="match status" value="1"/>
</dbReference>
<dbReference type="FunFam" id="3.40.50.150:FF:000409">
    <property type="entry name" value="RNA methylase, PF01170 family"/>
    <property type="match status" value="1"/>
</dbReference>
<dbReference type="Gene3D" id="3.30.2130.30">
    <property type="match status" value="1"/>
</dbReference>
<dbReference type="Gene3D" id="3.40.50.150">
    <property type="entry name" value="Vaccinia Virus protein VP39"/>
    <property type="match status" value="1"/>
</dbReference>
<dbReference type="InterPro" id="IPR002052">
    <property type="entry name" value="DNA_methylase_N6_adenine_CS"/>
</dbReference>
<dbReference type="InterPro" id="IPR000241">
    <property type="entry name" value="RlmKL-like_Mtase"/>
</dbReference>
<dbReference type="InterPro" id="IPR053943">
    <property type="entry name" value="RlmKL-like_Mtase_CS"/>
</dbReference>
<dbReference type="InterPro" id="IPR054170">
    <property type="entry name" value="RlmL_1st"/>
</dbReference>
<dbReference type="InterPro" id="IPR029063">
    <property type="entry name" value="SAM-dependent_MTases_sf"/>
</dbReference>
<dbReference type="InterPro" id="IPR004114">
    <property type="entry name" value="THUMP_dom"/>
</dbReference>
<dbReference type="InterPro" id="IPR053485">
    <property type="entry name" value="tRNA_guanine-N2-MTase"/>
</dbReference>
<dbReference type="NCBIfam" id="NF040721">
    <property type="entry name" value="Trm14_Arch"/>
    <property type="match status" value="1"/>
</dbReference>
<dbReference type="PANTHER" id="PTHR14911">
    <property type="entry name" value="THUMP DOMAIN-CONTAINING"/>
    <property type="match status" value="1"/>
</dbReference>
<dbReference type="PANTHER" id="PTHR14911:SF13">
    <property type="entry name" value="TRNA (GUANINE(6)-N2)-METHYLTRANSFERASE THUMP3"/>
    <property type="match status" value="1"/>
</dbReference>
<dbReference type="Pfam" id="PF22020">
    <property type="entry name" value="RlmL_1st"/>
    <property type="match status" value="1"/>
</dbReference>
<dbReference type="Pfam" id="PF02926">
    <property type="entry name" value="THUMP"/>
    <property type="match status" value="1"/>
</dbReference>
<dbReference type="Pfam" id="PF01170">
    <property type="entry name" value="UPF0020"/>
    <property type="match status" value="1"/>
</dbReference>
<dbReference type="SMART" id="SM00981">
    <property type="entry name" value="THUMP"/>
    <property type="match status" value="1"/>
</dbReference>
<dbReference type="SUPFAM" id="SSF53335">
    <property type="entry name" value="S-adenosyl-L-methionine-dependent methyltransferases"/>
    <property type="match status" value="1"/>
</dbReference>
<dbReference type="SUPFAM" id="SSF143437">
    <property type="entry name" value="THUMP domain-like"/>
    <property type="match status" value="1"/>
</dbReference>
<dbReference type="PROSITE" id="PS00092">
    <property type="entry name" value="N6_MTASE"/>
    <property type="match status" value="1"/>
</dbReference>
<dbReference type="PROSITE" id="PS51165">
    <property type="entry name" value="THUMP"/>
    <property type="match status" value="1"/>
</dbReference>
<dbReference type="PROSITE" id="PS01261">
    <property type="entry name" value="UPF0020"/>
    <property type="match status" value="1"/>
</dbReference>
<name>TRM14_METJA</name>
<evidence type="ECO:0000250" key="1">
    <source>
        <dbReference type="UniProtKB" id="Q8U248"/>
    </source>
</evidence>
<evidence type="ECO:0000255" key="2">
    <source>
        <dbReference type="PROSITE-ProRule" id="PRU00529"/>
    </source>
</evidence>
<evidence type="ECO:0000269" key="3">
    <source>
    </source>
</evidence>
<evidence type="ECO:0000303" key="4">
    <source>
    </source>
</evidence>
<evidence type="ECO:0000305" key="5"/>
<accession>Q57880</accession>
<sequence length="381" mass="43738">MDYYVTLSPGLEKISKNEIESFGGKIKEIRENKGRIFFSGDLKLIPKINYLSRTIERMNILLHREEIPNIALDDIYKRVYNIDWTEWIKENQSFAIRPLRAGEHNFTSIDIGRVAGEAVIKSYQRDKNIRLKVNLDEPDVIVRVEVIFDELIVGIDTTGDIALDKRGYRVFNHPAHLNATIASSLVYLSDWKDDEMLLDPMCGSGTIPIEGALMKRNIPPGKFRENKYGFKFIDIFGYELLDKIKKEIVENKNIYKIIGLDKNQKYLDGAKDNAKNAEVLDTIEFICGDATKLHEKFNESDVIIANPPYGIRIGSKRSVKKLYDEFLSSAKEIMHGSSRLIVITAEDKMFKDAIAKNNFEVKEEFNVMFGGLMTRVFYLTL</sequence>
<feature type="chain" id="PRO_0000140480" description="tRNA (guanine(6)-N2)-methyltransferase">
    <location>
        <begin position="1"/>
        <end position="381"/>
    </location>
</feature>
<feature type="domain" description="THUMP" evidence="2">
    <location>
        <begin position="43"/>
        <end position="157"/>
    </location>
</feature>
<feature type="binding site" evidence="1">
    <location>
        <begin position="173"/>
        <end position="177"/>
    </location>
    <ligand>
        <name>S-adenosyl-L-methionine</name>
        <dbReference type="ChEBI" id="CHEBI:59789"/>
    </ligand>
</feature>
<feature type="binding site" evidence="1">
    <location>
        <begin position="204"/>
        <end position="206"/>
    </location>
    <ligand>
        <name>S-adenosyl-L-methionine</name>
        <dbReference type="ChEBI" id="CHEBI:59789"/>
    </ligand>
</feature>
<feature type="binding site" evidence="1">
    <location>
        <position position="261"/>
    </location>
    <ligand>
        <name>S-adenosyl-L-methionine</name>
        <dbReference type="ChEBI" id="CHEBI:59789"/>
    </ligand>
</feature>
<feature type="binding site" evidence="1">
    <location>
        <begin position="289"/>
        <end position="290"/>
    </location>
    <ligand>
        <name>S-adenosyl-L-methionine</name>
        <dbReference type="ChEBI" id="CHEBI:59789"/>
    </ligand>
</feature>
<feature type="binding site" evidence="1">
    <location>
        <position position="306"/>
    </location>
    <ligand>
        <name>S-adenosyl-L-methionine</name>
        <dbReference type="ChEBI" id="CHEBI:59789"/>
    </ligand>
</feature>
<protein>
    <recommendedName>
        <fullName evidence="5">tRNA (guanine(6)-N2)-methyltransferase</fullName>
        <ecNumber evidence="3">2.1.1.256</ecNumber>
    </recommendedName>
    <alternativeName>
        <fullName evidence="5">tRNA m2G6-methyltransferase</fullName>
    </alternativeName>
</protein>
<reference key="1">
    <citation type="journal article" date="1996" name="Science">
        <title>Complete genome sequence of the methanogenic archaeon, Methanococcus jannaschii.</title>
        <authorList>
            <person name="Bult C.J."/>
            <person name="White O."/>
            <person name="Olsen G.J."/>
            <person name="Zhou L."/>
            <person name="Fleischmann R.D."/>
            <person name="Sutton G.G."/>
            <person name="Blake J.A."/>
            <person name="FitzGerald L.M."/>
            <person name="Clayton R.A."/>
            <person name="Gocayne J.D."/>
            <person name="Kerlavage A.R."/>
            <person name="Dougherty B.A."/>
            <person name="Tomb J.-F."/>
            <person name="Adams M.D."/>
            <person name="Reich C.I."/>
            <person name="Overbeek R."/>
            <person name="Kirkness E.F."/>
            <person name="Weinstock K.G."/>
            <person name="Merrick J.M."/>
            <person name="Glodek A."/>
            <person name="Scott J.L."/>
            <person name="Geoghagen N.S.M."/>
            <person name="Weidman J.F."/>
            <person name="Fuhrmann J.L."/>
            <person name="Nguyen D."/>
            <person name="Utterback T.R."/>
            <person name="Kelley J.M."/>
            <person name="Peterson J.D."/>
            <person name="Sadow P.W."/>
            <person name="Hanna M.C."/>
            <person name="Cotton M.D."/>
            <person name="Roberts K.M."/>
            <person name="Hurst M.A."/>
            <person name="Kaine B.P."/>
            <person name="Borodovsky M."/>
            <person name="Klenk H.-P."/>
            <person name="Fraser C.M."/>
            <person name="Smith H.O."/>
            <person name="Woese C.R."/>
            <person name="Venter J.C."/>
        </authorList>
    </citation>
    <scope>NUCLEOTIDE SEQUENCE [LARGE SCALE GENOMIC DNA]</scope>
    <source>
        <strain>ATCC 43067 / DSM 2661 / JAL-1 / JCM 10045 / NBRC 100440</strain>
    </source>
</reference>
<reference key="2">
    <citation type="journal article" date="2011" name="Nucleic Acids Res.">
        <title>Formation of m2G6 in Methanocaldococcus jannaschii tRNA catalyzed by the novel methyltransferase Trm14.</title>
        <authorList>
            <person name="Menezes S."/>
            <person name="Gaston K.W."/>
            <person name="Krivos K.L."/>
            <person name="Apolinario E.E."/>
            <person name="Reich N.O."/>
            <person name="Sowers K.R."/>
            <person name="Limbach P.A."/>
            <person name="Perona J.J."/>
        </authorList>
    </citation>
    <scope>FUNCTION</scope>
    <scope>CATALYTIC ACTIVITY</scope>
    <scope>GENE NAME</scope>
    <source>
        <strain>ATCC 43067 / DSM 2661 / JAL-1 / JCM 10045 / NBRC 100440</strain>
    </source>
</reference>
<keyword id="KW-0963">Cytoplasm</keyword>
<keyword id="KW-0489">Methyltransferase</keyword>
<keyword id="KW-1185">Reference proteome</keyword>
<keyword id="KW-0694">RNA-binding</keyword>
<keyword id="KW-0949">S-adenosyl-L-methionine</keyword>
<keyword id="KW-0808">Transferase</keyword>
<keyword id="KW-0819">tRNA processing</keyword>
<organism>
    <name type="scientific">Methanocaldococcus jannaschii (strain ATCC 43067 / DSM 2661 / JAL-1 / JCM 10045 / NBRC 100440)</name>
    <name type="common">Methanococcus jannaschii</name>
    <dbReference type="NCBI Taxonomy" id="243232"/>
    <lineage>
        <taxon>Archaea</taxon>
        <taxon>Methanobacteriati</taxon>
        <taxon>Methanobacteriota</taxon>
        <taxon>Methanomada group</taxon>
        <taxon>Methanococci</taxon>
        <taxon>Methanococcales</taxon>
        <taxon>Methanocaldococcaceae</taxon>
        <taxon>Methanocaldococcus</taxon>
    </lineage>
</organism>
<proteinExistence type="evidence at protein level"/>